<protein>
    <recommendedName>
        <fullName>Coiled-coil domain-containing protein 137</fullName>
    </recommendedName>
</protein>
<evidence type="ECO:0000255" key="1"/>
<evidence type="ECO:0000256" key="2">
    <source>
        <dbReference type="SAM" id="MobiDB-lite"/>
    </source>
</evidence>
<evidence type="ECO:0000269" key="3">
    <source>
    </source>
</evidence>
<evidence type="ECO:0000303" key="4">
    <source>
    </source>
</evidence>
<evidence type="ECO:0007744" key="5">
    <source>
    </source>
</evidence>
<evidence type="ECO:0007744" key="6">
    <source>
    </source>
</evidence>
<evidence type="ECO:0007744" key="7">
    <source>
    </source>
</evidence>
<evidence type="ECO:0007744" key="8">
    <source>
    </source>
</evidence>
<evidence type="ECO:0007744" key="9">
    <source>
    </source>
</evidence>
<evidence type="ECO:0007744" key="10">
    <source>
    </source>
</evidence>
<keyword id="KW-0158">Chromosome</keyword>
<keyword id="KW-0175">Coiled coil</keyword>
<keyword id="KW-0597">Phosphoprotein</keyword>
<keyword id="KW-1267">Proteomics identification</keyword>
<keyword id="KW-1185">Reference proteome</keyword>
<comment type="interaction">
    <interactant intactId="EBI-714654">
        <id>Q6PK04</id>
    </interactant>
    <interactant intactId="EBI-706637">
        <id>Q15554</id>
        <label>TERF2</label>
    </interactant>
    <organismsDiffer>false</organismsDiffer>
    <experiments>2</experiments>
</comment>
<comment type="subcellular location">
    <subcellularLocation>
        <location evidence="3">Chromosome</location>
    </subcellularLocation>
</comment>
<dbReference type="EMBL" id="BC009369">
    <property type="protein sequence ID" value="AAH09369.1"/>
    <property type="molecule type" value="mRNA"/>
</dbReference>
<dbReference type="CCDS" id="CCDS42400.1"/>
<dbReference type="RefSeq" id="NP_954981.1">
    <property type="nucleotide sequence ID" value="NM_199287.3"/>
</dbReference>
<dbReference type="SMR" id="Q6PK04"/>
<dbReference type="BioGRID" id="130846">
    <property type="interactions" value="363"/>
</dbReference>
<dbReference type="FunCoup" id="Q6PK04">
    <property type="interactions" value="2653"/>
</dbReference>
<dbReference type="IntAct" id="Q6PK04">
    <property type="interactions" value="183"/>
</dbReference>
<dbReference type="MINT" id="Q6PK04"/>
<dbReference type="STRING" id="9606.ENSP00000329360"/>
<dbReference type="iPTMnet" id="Q6PK04"/>
<dbReference type="MetOSite" id="Q6PK04"/>
<dbReference type="PhosphoSitePlus" id="Q6PK04"/>
<dbReference type="SwissPalm" id="Q6PK04"/>
<dbReference type="BioMuta" id="CCDC137"/>
<dbReference type="DMDM" id="74737969"/>
<dbReference type="jPOST" id="Q6PK04"/>
<dbReference type="MassIVE" id="Q6PK04"/>
<dbReference type="PaxDb" id="9606-ENSP00000329360"/>
<dbReference type="PeptideAtlas" id="Q6PK04"/>
<dbReference type="ProteomicsDB" id="67229"/>
<dbReference type="Pumba" id="Q6PK04"/>
<dbReference type="Antibodypedia" id="66426">
    <property type="antibodies" value="85 antibodies from 18 providers"/>
</dbReference>
<dbReference type="DNASU" id="339230"/>
<dbReference type="Ensembl" id="ENST00000329214.13">
    <property type="protein sequence ID" value="ENSP00000329360.8"/>
    <property type="gene ID" value="ENSG00000185298.13"/>
</dbReference>
<dbReference type="Ensembl" id="ENST00000575223.5">
    <property type="protein sequence ID" value="ENSP00000458884.1"/>
    <property type="gene ID" value="ENSG00000185298.13"/>
</dbReference>
<dbReference type="GeneID" id="339230"/>
<dbReference type="KEGG" id="hsa:339230"/>
<dbReference type="MANE-Select" id="ENST00000329214.13">
    <property type="protein sequence ID" value="ENSP00000329360.8"/>
    <property type="RefSeq nucleotide sequence ID" value="NM_199287.3"/>
    <property type="RefSeq protein sequence ID" value="NP_954981.1"/>
</dbReference>
<dbReference type="UCSC" id="uc002kbc.5">
    <property type="organism name" value="human"/>
</dbReference>
<dbReference type="AGR" id="HGNC:33451"/>
<dbReference type="CTD" id="339230"/>
<dbReference type="DisGeNET" id="339230"/>
<dbReference type="GeneCards" id="CCDC137"/>
<dbReference type="HGNC" id="HGNC:33451">
    <property type="gene designation" value="CCDC137"/>
</dbReference>
<dbReference type="HPA" id="ENSG00000185298">
    <property type="expression patterns" value="Low tissue specificity"/>
</dbReference>
<dbReference type="neXtProt" id="NX_Q6PK04"/>
<dbReference type="OpenTargets" id="ENSG00000185298"/>
<dbReference type="PharmGKB" id="PA162381422"/>
<dbReference type="VEuPathDB" id="HostDB:ENSG00000185298"/>
<dbReference type="eggNOG" id="ENOG502S2F4">
    <property type="taxonomic scope" value="Eukaryota"/>
</dbReference>
<dbReference type="GeneTree" id="ENSGT00390000004169"/>
<dbReference type="InParanoid" id="Q6PK04"/>
<dbReference type="OMA" id="HHGVRDP"/>
<dbReference type="OrthoDB" id="5876637at2759"/>
<dbReference type="PAN-GO" id="Q6PK04">
    <property type="GO annotations" value="1 GO annotation based on evolutionary models"/>
</dbReference>
<dbReference type="PhylomeDB" id="Q6PK04"/>
<dbReference type="TreeFam" id="TF332311"/>
<dbReference type="PathwayCommons" id="Q6PK04"/>
<dbReference type="SignaLink" id="Q6PK04"/>
<dbReference type="BioGRID-ORCS" id="339230">
    <property type="hits" value="133 hits in 1158 CRISPR screens"/>
</dbReference>
<dbReference type="CD-CODE" id="91857CE7">
    <property type="entry name" value="Nucleolus"/>
</dbReference>
<dbReference type="ChiTaRS" id="CCDC137">
    <property type="organism name" value="human"/>
</dbReference>
<dbReference type="GeneWiki" id="CCDC137"/>
<dbReference type="GenomeRNAi" id="339230"/>
<dbReference type="Pharos" id="Q6PK04">
    <property type="development level" value="Tdark"/>
</dbReference>
<dbReference type="PRO" id="PR:Q6PK04"/>
<dbReference type="Proteomes" id="UP000005640">
    <property type="component" value="Chromosome 17"/>
</dbReference>
<dbReference type="RNAct" id="Q6PK04">
    <property type="molecule type" value="protein"/>
</dbReference>
<dbReference type="Bgee" id="ENSG00000185298">
    <property type="expression patterns" value="Expressed in lower esophagus mucosa and 155 other cell types or tissues"/>
</dbReference>
<dbReference type="ExpressionAtlas" id="Q6PK04">
    <property type="expression patterns" value="baseline and differential"/>
</dbReference>
<dbReference type="GO" id="GO:0005694">
    <property type="term" value="C:chromosome"/>
    <property type="evidence" value="ECO:0000314"/>
    <property type="project" value="UniProtKB"/>
</dbReference>
<dbReference type="GO" id="GO:0005730">
    <property type="term" value="C:nucleolus"/>
    <property type="evidence" value="ECO:0000314"/>
    <property type="project" value="HPA"/>
</dbReference>
<dbReference type="GO" id="GO:0005654">
    <property type="term" value="C:nucleoplasm"/>
    <property type="evidence" value="ECO:0000314"/>
    <property type="project" value="HPA"/>
</dbReference>
<dbReference type="GO" id="GO:0005634">
    <property type="term" value="C:nucleus"/>
    <property type="evidence" value="ECO:0000318"/>
    <property type="project" value="GO_Central"/>
</dbReference>
<dbReference type="GO" id="GO:0003723">
    <property type="term" value="F:RNA binding"/>
    <property type="evidence" value="ECO:0007005"/>
    <property type="project" value="UniProtKB"/>
</dbReference>
<dbReference type="InterPro" id="IPR026680">
    <property type="entry name" value="CCDC137"/>
</dbReference>
<dbReference type="PANTHER" id="PTHR21838">
    <property type="entry name" value="COILED-COIL DOMAIN-CONTAINING PROTEIN 137"/>
    <property type="match status" value="1"/>
</dbReference>
<dbReference type="PANTHER" id="PTHR21838:SF2">
    <property type="entry name" value="COILED-COIL DOMAIN-CONTAINING PROTEIN 137"/>
    <property type="match status" value="1"/>
</dbReference>
<reference key="1">
    <citation type="journal article" date="2004" name="Genome Res.">
        <title>The status, quality, and expansion of the NIH full-length cDNA project: the Mammalian Gene Collection (MGC).</title>
        <authorList>
            <consortium name="The MGC Project Team"/>
        </authorList>
    </citation>
    <scope>NUCLEOTIDE SEQUENCE [LARGE SCALE MRNA]</scope>
    <source>
        <tissue>Muscle</tissue>
    </source>
</reference>
<reference key="2">
    <citation type="journal article" date="2008" name="J. Proteome Res.">
        <title>Combining protein-based IMAC, peptide-based IMAC, and MudPIT for efficient phosphoproteomic analysis.</title>
        <authorList>
            <person name="Cantin G.T."/>
            <person name="Yi W."/>
            <person name="Lu B."/>
            <person name="Park S.K."/>
            <person name="Xu T."/>
            <person name="Lee J.-D."/>
            <person name="Yates J.R. III"/>
        </authorList>
    </citation>
    <scope>PHOSPHORYLATION [LARGE SCALE ANALYSIS] AT SER-233</scope>
    <scope>IDENTIFICATION BY MASS SPECTROMETRY [LARGE SCALE ANALYSIS]</scope>
    <source>
        <tissue>Cervix carcinoma</tissue>
    </source>
</reference>
<reference key="3">
    <citation type="journal article" date="2008" name="Proc. Natl. Acad. Sci. U.S.A.">
        <title>A quantitative atlas of mitotic phosphorylation.</title>
        <authorList>
            <person name="Dephoure N."/>
            <person name="Zhou C."/>
            <person name="Villen J."/>
            <person name="Beausoleil S.A."/>
            <person name="Bakalarski C.E."/>
            <person name="Elledge S.J."/>
            <person name="Gygi S.P."/>
        </authorList>
    </citation>
    <scope>PHOSPHORYLATION [LARGE SCALE ANALYSIS] AT SER-233</scope>
    <scope>IDENTIFICATION BY MASS SPECTROMETRY [LARGE SCALE ANALYSIS]</scope>
    <source>
        <tissue>Cervix carcinoma</tissue>
    </source>
</reference>
<reference key="4">
    <citation type="journal article" date="2009" name="Sci. Signal.">
        <title>Quantitative phosphoproteomic analysis of T cell receptor signaling reveals system-wide modulation of protein-protein interactions.</title>
        <authorList>
            <person name="Mayya V."/>
            <person name="Lundgren D.H."/>
            <person name="Hwang S.-I."/>
            <person name="Rezaul K."/>
            <person name="Wu L."/>
            <person name="Eng J.K."/>
            <person name="Rodionov V."/>
            <person name="Han D.K."/>
        </authorList>
    </citation>
    <scope>PHOSPHORYLATION [LARGE SCALE ANALYSIS] AT SER-233</scope>
    <scope>IDENTIFICATION BY MASS SPECTROMETRY [LARGE SCALE ANALYSIS]</scope>
    <source>
        <tissue>Leukemic T-cell</tissue>
    </source>
</reference>
<reference key="5">
    <citation type="journal article" date="2010" name="Cell">
        <title>The protein composition of mitotic chromosomes determined using multiclassifier combinatorial proteomics.</title>
        <authorList>
            <person name="Ohta S."/>
            <person name="Bukowski-Wills J.C."/>
            <person name="Sanchez-Pulido L."/>
            <person name="Alves Fde L."/>
            <person name="Wood L."/>
            <person name="Chen Z.A."/>
            <person name="Platani M."/>
            <person name="Fischer L."/>
            <person name="Hudson D.F."/>
            <person name="Ponting C.P."/>
            <person name="Fukagawa T."/>
            <person name="Earnshaw W.C."/>
            <person name="Rappsilber J."/>
        </authorList>
    </citation>
    <scope>SUBCELLULAR LOCATION</scope>
</reference>
<reference key="6">
    <citation type="journal article" date="2010" name="Sci. Signal.">
        <title>Quantitative phosphoproteomics reveals widespread full phosphorylation site occupancy during mitosis.</title>
        <authorList>
            <person name="Olsen J.V."/>
            <person name="Vermeulen M."/>
            <person name="Santamaria A."/>
            <person name="Kumar C."/>
            <person name="Miller M.L."/>
            <person name="Jensen L.J."/>
            <person name="Gnad F."/>
            <person name="Cox J."/>
            <person name="Jensen T.S."/>
            <person name="Nigg E.A."/>
            <person name="Brunak S."/>
            <person name="Mann M."/>
        </authorList>
    </citation>
    <scope>PHOSPHORYLATION [LARGE SCALE ANALYSIS] AT SER-19</scope>
    <scope>IDENTIFICATION BY MASS SPECTROMETRY [LARGE SCALE ANALYSIS]</scope>
    <source>
        <tissue>Cervix carcinoma</tissue>
    </source>
</reference>
<reference key="7">
    <citation type="journal article" date="2011" name="BMC Syst. Biol.">
        <title>Initial characterization of the human central proteome.</title>
        <authorList>
            <person name="Burkard T.R."/>
            <person name="Planyavsky M."/>
            <person name="Kaupe I."/>
            <person name="Breitwieser F.P."/>
            <person name="Buerckstuemmer T."/>
            <person name="Bennett K.L."/>
            <person name="Superti-Furga G."/>
            <person name="Colinge J."/>
        </authorList>
    </citation>
    <scope>IDENTIFICATION BY MASS SPECTROMETRY [LARGE SCALE ANALYSIS]</scope>
</reference>
<reference key="8">
    <citation type="journal article" date="2011" name="Sci. Signal.">
        <title>System-wide temporal characterization of the proteome and phosphoproteome of human embryonic stem cell differentiation.</title>
        <authorList>
            <person name="Rigbolt K.T."/>
            <person name="Prokhorova T.A."/>
            <person name="Akimov V."/>
            <person name="Henningsen J."/>
            <person name="Johansen P.T."/>
            <person name="Kratchmarova I."/>
            <person name="Kassem M."/>
            <person name="Mann M."/>
            <person name="Olsen J.V."/>
            <person name="Blagoev B."/>
        </authorList>
    </citation>
    <scope>PHOSPHORYLATION [LARGE SCALE ANALYSIS] AT SER-19</scope>
    <scope>IDENTIFICATION BY MASS SPECTROMETRY [LARGE SCALE ANALYSIS]</scope>
</reference>
<reference key="9">
    <citation type="journal article" date="2013" name="J. Proteome Res.">
        <title>Toward a comprehensive characterization of a human cancer cell phosphoproteome.</title>
        <authorList>
            <person name="Zhou H."/>
            <person name="Di Palma S."/>
            <person name="Preisinger C."/>
            <person name="Peng M."/>
            <person name="Polat A.N."/>
            <person name="Heck A.J."/>
            <person name="Mohammed S."/>
        </authorList>
    </citation>
    <scope>PHOSPHORYLATION [LARGE SCALE ANALYSIS] AT SER-19</scope>
    <scope>IDENTIFICATION BY MASS SPECTROMETRY [LARGE SCALE ANALYSIS]</scope>
    <source>
        <tissue>Cervix carcinoma</tissue>
    </source>
</reference>
<sequence length="289" mass="33231">MAGAGRGAAVSRVQAGPGSPRRARGRQQVQPLGKQRPAPWPGLRSKEKKKVNCKPKNQDEQEIPFRLREIMRSRQEMKNPISNKKRKKAAQVTFRKTLEKEAKGEEPDIAVPKFKQRKGESDGAYIHRMQQEAQHVLFLSKNQAIRQPEVQAAPKEKSEQKKAKKAFQKRRLDKVRRKKEEKAADRLEQELLRDTVKFGEVVLQPPELTARPQRSVSKDQPGRRSQMLRMLLSPGGVSQPLTASLARQRIVEEERERAVQAYRALKQRQQQLHGERPHLTSRKKPEPQL</sequence>
<name>CC137_HUMAN</name>
<proteinExistence type="evidence at protein level"/>
<gene>
    <name type="primary">CCDC137</name>
    <name evidence="4" type="synonym">cPERP-B</name>
</gene>
<feature type="chain" id="PRO_0000288452" description="Coiled-coil domain-containing protein 137">
    <location>
        <begin position="1"/>
        <end position="289"/>
    </location>
</feature>
<feature type="region of interest" description="Disordered" evidence="2">
    <location>
        <begin position="1"/>
        <end position="64"/>
    </location>
</feature>
<feature type="region of interest" description="Disordered" evidence="2">
    <location>
        <begin position="149"/>
        <end position="184"/>
    </location>
</feature>
<feature type="region of interest" description="Disordered" evidence="2">
    <location>
        <begin position="204"/>
        <end position="225"/>
    </location>
</feature>
<feature type="region of interest" description="Disordered" evidence="2">
    <location>
        <begin position="265"/>
        <end position="289"/>
    </location>
</feature>
<feature type="coiled-coil region" evidence="1">
    <location>
        <begin position="155"/>
        <end position="197"/>
    </location>
</feature>
<feature type="coiled-coil region" evidence="1">
    <location>
        <begin position="247"/>
        <end position="273"/>
    </location>
</feature>
<feature type="compositionally biased region" description="Low complexity" evidence="2">
    <location>
        <begin position="7"/>
        <end position="20"/>
    </location>
</feature>
<feature type="compositionally biased region" description="Basic residues" evidence="2">
    <location>
        <begin position="162"/>
        <end position="177"/>
    </location>
</feature>
<feature type="compositionally biased region" description="Basic and acidic residues" evidence="2">
    <location>
        <begin position="273"/>
        <end position="289"/>
    </location>
</feature>
<feature type="modified residue" description="Phosphoserine" evidence="8 9 10">
    <location>
        <position position="19"/>
    </location>
</feature>
<feature type="modified residue" description="Phosphoserine" evidence="5 6 7">
    <location>
        <position position="233"/>
    </location>
</feature>
<feature type="sequence variant" id="VAR_050739" description="In dbSNP:rs7226091.">
    <original>H</original>
    <variation>Q</variation>
    <location>
        <position position="127"/>
    </location>
</feature>
<feature type="sequence variant" id="VAR_050740" description="In dbSNP:rs11150805.">
    <original>R</original>
    <variation>W</variation>
    <location>
        <position position="177"/>
    </location>
</feature>
<feature type="sequence variant" id="VAR_050741" description="In dbSNP:rs11546630.">
    <original>R</original>
    <variation>Q</variation>
    <location>
        <position position="229"/>
    </location>
</feature>
<feature type="sequence variant" id="VAR_061582" description="In dbSNP:rs11546631.">
    <original>R</original>
    <variation>W</variation>
    <location>
        <position position="282"/>
    </location>
</feature>
<accession>Q6PK04</accession>
<organism>
    <name type="scientific">Homo sapiens</name>
    <name type="common">Human</name>
    <dbReference type="NCBI Taxonomy" id="9606"/>
    <lineage>
        <taxon>Eukaryota</taxon>
        <taxon>Metazoa</taxon>
        <taxon>Chordata</taxon>
        <taxon>Craniata</taxon>
        <taxon>Vertebrata</taxon>
        <taxon>Euteleostomi</taxon>
        <taxon>Mammalia</taxon>
        <taxon>Eutheria</taxon>
        <taxon>Euarchontoglires</taxon>
        <taxon>Primates</taxon>
        <taxon>Haplorrhini</taxon>
        <taxon>Catarrhini</taxon>
        <taxon>Hominidae</taxon>
        <taxon>Homo</taxon>
    </lineage>
</organism>